<accession>A5WCU0</accession>
<gene>
    <name evidence="2" type="primary">ddl</name>
    <name type="ordered locus">PsycPRwf_0526</name>
</gene>
<organism>
    <name type="scientific">Psychrobacter sp. (strain PRwf-1)</name>
    <dbReference type="NCBI Taxonomy" id="349106"/>
    <lineage>
        <taxon>Bacteria</taxon>
        <taxon>Pseudomonadati</taxon>
        <taxon>Pseudomonadota</taxon>
        <taxon>Gammaproteobacteria</taxon>
        <taxon>Moraxellales</taxon>
        <taxon>Moraxellaceae</taxon>
        <taxon>Psychrobacter</taxon>
    </lineage>
</organism>
<sequence>MPMTMTQSATNPTATPVSANKASANAATTQDPSIFGKVAVVFGGNSNERAVSLDSGNAVLQALQSQGIDATHFDPKDQDVTELKNYDRVFNVLHGRGGEDGQLQGLLDWLGLPQTGSGVLASAIGMDKVRTKQLWHGCGLSTAPFAVLGADTDWQQIVNTLGLPLIVKPVHEGSSIGMSKVNTLDELPKAYEVAAGCGDVVMAEKWITGREFTIVIIDDEAYPVIRLQPADISNFYDYEAKYNRNDTQYHIPCGLSAEEEAHLQALSLAAFKAVDAKGWGRIDAMQDEEGNFWLLEINTVPGMTSHSLVPMAAKARGMNFEQLCWHILAQTL</sequence>
<keyword id="KW-0067">ATP-binding</keyword>
<keyword id="KW-0133">Cell shape</keyword>
<keyword id="KW-0961">Cell wall biogenesis/degradation</keyword>
<keyword id="KW-0963">Cytoplasm</keyword>
<keyword id="KW-0436">Ligase</keyword>
<keyword id="KW-0460">Magnesium</keyword>
<keyword id="KW-0464">Manganese</keyword>
<keyword id="KW-0479">Metal-binding</keyword>
<keyword id="KW-0547">Nucleotide-binding</keyword>
<keyword id="KW-0573">Peptidoglycan synthesis</keyword>
<feature type="chain" id="PRO_0000341157" description="D-alanine--D-alanine ligase">
    <location>
        <begin position="1"/>
        <end position="332"/>
    </location>
</feature>
<feature type="domain" description="ATP-grasp" evidence="2">
    <location>
        <begin position="132"/>
        <end position="329"/>
    </location>
</feature>
<feature type="region of interest" description="Disordered" evidence="3">
    <location>
        <begin position="1"/>
        <end position="28"/>
    </location>
</feature>
<feature type="compositionally biased region" description="Polar residues" evidence="3">
    <location>
        <begin position="1"/>
        <end position="17"/>
    </location>
</feature>
<feature type="compositionally biased region" description="Low complexity" evidence="3">
    <location>
        <begin position="18"/>
        <end position="28"/>
    </location>
</feature>
<feature type="binding site" evidence="2">
    <location>
        <begin position="158"/>
        <end position="213"/>
    </location>
    <ligand>
        <name>ATP</name>
        <dbReference type="ChEBI" id="CHEBI:30616"/>
    </ligand>
</feature>
<feature type="binding site" evidence="2">
    <location>
        <position position="283"/>
    </location>
    <ligand>
        <name>Mg(2+)</name>
        <dbReference type="ChEBI" id="CHEBI:18420"/>
        <label>1</label>
    </ligand>
</feature>
<feature type="binding site" evidence="2">
    <location>
        <position position="296"/>
    </location>
    <ligand>
        <name>Mg(2+)</name>
        <dbReference type="ChEBI" id="CHEBI:18420"/>
        <label>1</label>
    </ligand>
</feature>
<feature type="binding site" evidence="2">
    <location>
        <position position="296"/>
    </location>
    <ligand>
        <name>Mg(2+)</name>
        <dbReference type="ChEBI" id="CHEBI:18420"/>
        <label>2</label>
    </ligand>
</feature>
<feature type="binding site" evidence="2">
    <location>
        <position position="298"/>
    </location>
    <ligand>
        <name>Mg(2+)</name>
        <dbReference type="ChEBI" id="CHEBI:18420"/>
        <label>2</label>
    </ligand>
</feature>
<protein>
    <recommendedName>
        <fullName evidence="2">D-alanine--D-alanine ligase</fullName>
        <ecNumber evidence="2">6.3.2.4</ecNumber>
    </recommendedName>
    <alternativeName>
        <fullName evidence="2">D-Ala-D-Ala ligase</fullName>
    </alternativeName>
    <alternativeName>
        <fullName evidence="2">D-alanylalanine synthetase</fullName>
    </alternativeName>
</protein>
<dbReference type="EC" id="6.3.2.4" evidence="2"/>
<dbReference type="EMBL" id="CP000713">
    <property type="protein sequence ID" value="ABQ93481.1"/>
    <property type="molecule type" value="Genomic_DNA"/>
</dbReference>
<dbReference type="SMR" id="A5WCU0"/>
<dbReference type="STRING" id="349106.PsycPRwf_0526"/>
<dbReference type="KEGG" id="prw:PsycPRwf_0526"/>
<dbReference type="eggNOG" id="COG1181">
    <property type="taxonomic scope" value="Bacteria"/>
</dbReference>
<dbReference type="HOGENOM" id="CLU_039268_1_2_6"/>
<dbReference type="UniPathway" id="UPA00219"/>
<dbReference type="GO" id="GO:0005829">
    <property type="term" value="C:cytosol"/>
    <property type="evidence" value="ECO:0007669"/>
    <property type="project" value="TreeGrafter"/>
</dbReference>
<dbReference type="GO" id="GO:0005524">
    <property type="term" value="F:ATP binding"/>
    <property type="evidence" value="ECO:0007669"/>
    <property type="project" value="UniProtKB-KW"/>
</dbReference>
<dbReference type="GO" id="GO:0008716">
    <property type="term" value="F:D-alanine-D-alanine ligase activity"/>
    <property type="evidence" value="ECO:0007669"/>
    <property type="project" value="UniProtKB-UniRule"/>
</dbReference>
<dbReference type="GO" id="GO:0046872">
    <property type="term" value="F:metal ion binding"/>
    <property type="evidence" value="ECO:0007669"/>
    <property type="project" value="UniProtKB-KW"/>
</dbReference>
<dbReference type="GO" id="GO:0071555">
    <property type="term" value="P:cell wall organization"/>
    <property type="evidence" value="ECO:0007669"/>
    <property type="project" value="UniProtKB-KW"/>
</dbReference>
<dbReference type="GO" id="GO:0009252">
    <property type="term" value="P:peptidoglycan biosynthetic process"/>
    <property type="evidence" value="ECO:0007669"/>
    <property type="project" value="UniProtKB-UniRule"/>
</dbReference>
<dbReference type="GO" id="GO:0008360">
    <property type="term" value="P:regulation of cell shape"/>
    <property type="evidence" value="ECO:0007669"/>
    <property type="project" value="UniProtKB-KW"/>
</dbReference>
<dbReference type="FunFam" id="3.30.470.20:FF:000008">
    <property type="entry name" value="D-alanine--D-alanine ligase"/>
    <property type="match status" value="1"/>
</dbReference>
<dbReference type="Gene3D" id="3.40.50.20">
    <property type="match status" value="1"/>
</dbReference>
<dbReference type="Gene3D" id="3.30.1490.20">
    <property type="entry name" value="ATP-grasp fold, A domain"/>
    <property type="match status" value="1"/>
</dbReference>
<dbReference type="Gene3D" id="3.30.470.20">
    <property type="entry name" value="ATP-grasp fold, B domain"/>
    <property type="match status" value="1"/>
</dbReference>
<dbReference type="HAMAP" id="MF_00047">
    <property type="entry name" value="Dala_Dala_lig"/>
    <property type="match status" value="1"/>
</dbReference>
<dbReference type="InterPro" id="IPR011761">
    <property type="entry name" value="ATP-grasp"/>
</dbReference>
<dbReference type="InterPro" id="IPR013815">
    <property type="entry name" value="ATP_grasp_subdomain_1"/>
</dbReference>
<dbReference type="InterPro" id="IPR000291">
    <property type="entry name" value="D-Ala_lig_Van_CS"/>
</dbReference>
<dbReference type="InterPro" id="IPR005905">
    <property type="entry name" value="D_ala_D_ala"/>
</dbReference>
<dbReference type="InterPro" id="IPR011095">
    <property type="entry name" value="Dala_Dala_lig_C"/>
</dbReference>
<dbReference type="InterPro" id="IPR011127">
    <property type="entry name" value="Dala_Dala_lig_N"/>
</dbReference>
<dbReference type="InterPro" id="IPR016185">
    <property type="entry name" value="PreATP-grasp_dom_sf"/>
</dbReference>
<dbReference type="NCBIfam" id="TIGR01205">
    <property type="entry name" value="D_ala_D_alaTIGR"/>
    <property type="match status" value="1"/>
</dbReference>
<dbReference type="NCBIfam" id="NF002378">
    <property type="entry name" value="PRK01372.1"/>
    <property type="match status" value="1"/>
</dbReference>
<dbReference type="PANTHER" id="PTHR23132">
    <property type="entry name" value="D-ALANINE--D-ALANINE LIGASE"/>
    <property type="match status" value="1"/>
</dbReference>
<dbReference type="PANTHER" id="PTHR23132:SF23">
    <property type="entry name" value="D-ALANINE--D-ALANINE LIGASE B"/>
    <property type="match status" value="1"/>
</dbReference>
<dbReference type="Pfam" id="PF07478">
    <property type="entry name" value="Dala_Dala_lig_C"/>
    <property type="match status" value="1"/>
</dbReference>
<dbReference type="Pfam" id="PF01820">
    <property type="entry name" value="Dala_Dala_lig_N"/>
    <property type="match status" value="1"/>
</dbReference>
<dbReference type="PIRSF" id="PIRSF039102">
    <property type="entry name" value="Ddl/VanB"/>
    <property type="match status" value="1"/>
</dbReference>
<dbReference type="SUPFAM" id="SSF56059">
    <property type="entry name" value="Glutathione synthetase ATP-binding domain-like"/>
    <property type="match status" value="1"/>
</dbReference>
<dbReference type="SUPFAM" id="SSF52440">
    <property type="entry name" value="PreATP-grasp domain"/>
    <property type="match status" value="1"/>
</dbReference>
<dbReference type="PROSITE" id="PS50975">
    <property type="entry name" value="ATP_GRASP"/>
    <property type="match status" value="1"/>
</dbReference>
<dbReference type="PROSITE" id="PS00843">
    <property type="entry name" value="DALA_DALA_LIGASE_1"/>
    <property type="match status" value="1"/>
</dbReference>
<dbReference type="PROSITE" id="PS00844">
    <property type="entry name" value="DALA_DALA_LIGASE_2"/>
    <property type="match status" value="1"/>
</dbReference>
<name>DDL_PSYWF</name>
<comment type="function">
    <text evidence="2">Cell wall formation.</text>
</comment>
<comment type="catalytic activity">
    <reaction evidence="2">
        <text>2 D-alanine + ATP = D-alanyl-D-alanine + ADP + phosphate + H(+)</text>
        <dbReference type="Rhea" id="RHEA:11224"/>
        <dbReference type="ChEBI" id="CHEBI:15378"/>
        <dbReference type="ChEBI" id="CHEBI:30616"/>
        <dbReference type="ChEBI" id="CHEBI:43474"/>
        <dbReference type="ChEBI" id="CHEBI:57416"/>
        <dbReference type="ChEBI" id="CHEBI:57822"/>
        <dbReference type="ChEBI" id="CHEBI:456216"/>
        <dbReference type="EC" id="6.3.2.4"/>
    </reaction>
</comment>
<comment type="cofactor">
    <cofactor evidence="1">
        <name>Mg(2+)</name>
        <dbReference type="ChEBI" id="CHEBI:18420"/>
    </cofactor>
    <cofactor evidence="1">
        <name>Mn(2+)</name>
        <dbReference type="ChEBI" id="CHEBI:29035"/>
    </cofactor>
    <text evidence="1">Binds 2 magnesium or manganese ions per subunit.</text>
</comment>
<comment type="pathway">
    <text evidence="2">Cell wall biogenesis; peptidoglycan biosynthesis.</text>
</comment>
<comment type="subcellular location">
    <subcellularLocation>
        <location evidence="2">Cytoplasm</location>
    </subcellularLocation>
</comment>
<comment type="similarity">
    <text evidence="2">Belongs to the D-alanine--D-alanine ligase family.</text>
</comment>
<proteinExistence type="inferred from homology"/>
<reference key="1">
    <citation type="submission" date="2007-05" db="EMBL/GenBank/DDBJ databases">
        <title>Complete sequence of chromosome of Psychrobacter sp. PRwf-1.</title>
        <authorList>
            <consortium name="US DOE Joint Genome Institute"/>
            <person name="Copeland A."/>
            <person name="Lucas S."/>
            <person name="Lapidus A."/>
            <person name="Barry K."/>
            <person name="Detter J.C."/>
            <person name="Glavina del Rio T."/>
            <person name="Hammon N."/>
            <person name="Israni S."/>
            <person name="Dalin E."/>
            <person name="Tice H."/>
            <person name="Pitluck S."/>
            <person name="Chain P."/>
            <person name="Malfatti S."/>
            <person name="Shin M."/>
            <person name="Vergez L."/>
            <person name="Schmutz J."/>
            <person name="Larimer F."/>
            <person name="Land M."/>
            <person name="Hauser L."/>
            <person name="Kyrpides N."/>
            <person name="Kim E."/>
            <person name="Tiedje J."/>
            <person name="Richardson P."/>
        </authorList>
    </citation>
    <scope>NUCLEOTIDE SEQUENCE [LARGE SCALE GENOMIC DNA]</scope>
    <source>
        <strain>PRwf-1</strain>
    </source>
</reference>
<evidence type="ECO:0000250" key="1"/>
<evidence type="ECO:0000255" key="2">
    <source>
        <dbReference type="HAMAP-Rule" id="MF_00047"/>
    </source>
</evidence>
<evidence type="ECO:0000256" key="3">
    <source>
        <dbReference type="SAM" id="MobiDB-lite"/>
    </source>
</evidence>